<evidence type="ECO:0000255" key="1">
    <source>
        <dbReference type="HAMAP-Rule" id="MF_00278"/>
    </source>
</evidence>
<dbReference type="EC" id="4.3.2.10" evidence="1"/>
<dbReference type="EC" id="3.5.1.2" evidence="1"/>
<dbReference type="EMBL" id="BA000045">
    <property type="protein sequence ID" value="BAC88348.1"/>
    <property type="molecule type" value="Genomic_DNA"/>
</dbReference>
<dbReference type="RefSeq" id="NP_923353.1">
    <property type="nucleotide sequence ID" value="NC_005125.1"/>
</dbReference>
<dbReference type="RefSeq" id="WP_011140410.1">
    <property type="nucleotide sequence ID" value="NC_005125.1"/>
</dbReference>
<dbReference type="SMR" id="Q7NNK4"/>
<dbReference type="FunCoup" id="Q7NNK4">
    <property type="interactions" value="94"/>
</dbReference>
<dbReference type="STRING" id="251221.gene:10757879"/>
<dbReference type="EnsemblBacteria" id="BAC88348">
    <property type="protein sequence ID" value="BAC88348"/>
    <property type="gene ID" value="BAC88348"/>
</dbReference>
<dbReference type="KEGG" id="gvi:glr0407"/>
<dbReference type="PATRIC" id="fig|251221.4.peg.413"/>
<dbReference type="eggNOG" id="COG0118">
    <property type="taxonomic scope" value="Bacteria"/>
</dbReference>
<dbReference type="HOGENOM" id="CLU_071837_2_2_3"/>
<dbReference type="InParanoid" id="Q7NNK4"/>
<dbReference type="OrthoDB" id="9807137at2"/>
<dbReference type="PhylomeDB" id="Q7NNK4"/>
<dbReference type="UniPathway" id="UPA00031">
    <property type="reaction ID" value="UER00010"/>
</dbReference>
<dbReference type="Proteomes" id="UP000000557">
    <property type="component" value="Chromosome"/>
</dbReference>
<dbReference type="GO" id="GO:0005737">
    <property type="term" value="C:cytoplasm"/>
    <property type="evidence" value="ECO:0007669"/>
    <property type="project" value="UniProtKB-SubCell"/>
</dbReference>
<dbReference type="GO" id="GO:0004359">
    <property type="term" value="F:glutaminase activity"/>
    <property type="evidence" value="ECO:0007669"/>
    <property type="project" value="UniProtKB-EC"/>
</dbReference>
<dbReference type="GO" id="GO:0000107">
    <property type="term" value="F:imidazoleglycerol-phosphate synthase activity"/>
    <property type="evidence" value="ECO:0000318"/>
    <property type="project" value="GO_Central"/>
</dbReference>
<dbReference type="GO" id="GO:0016829">
    <property type="term" value="F:lyase activity"/>
    <property type="evidence" value="ECO:0007669"/>
    <property type="project" value="UniProtKB-KW"/>
</dbReference>
<dbReference type="GO" id="GO:0000105">
    <property type="term" value="P:L-histidine biosynthetic process"/>
    <property type="evidence" value="ECO:0007669"/>
    <property type="project" value="UniProtKB-UniRule"/>
</dbReference>
<dbReference type="CDD" id="cd01748">
    <property type="entry name" value="GATase1_IGP_Synthase"/>
    <property type="match status" value="1"/>
</dbReference>
<dbReference type="FunFam" id="3.40.50.880:FF:000009">
    <property type="entry name" value="Imidazole glycerol phosphate synthase subunit HisH"/>
    <property type="match status" value="1"/>
</dbReference>
<dbReference type="Gene3D" id="3.40.50.880">
    <property type="match status" value="1"/>
</dbReference>
<dbReference type="HAMAP" id="MF_00278">
    <property type="entry name" value="HisH"/>
    <property type="match status" value="1"/>
</dbReference>
<dbReference type="InterPro" id="IPR029062">
    <property type="entry name" value="Class_I_gatase-like"/>
</dbReference>
<dbReference type="InterPro" id="IPR017926">
    <property type="entry name" value="GATASE"/>
</dbReference>
<dbReference type="InterPro" id="IPR010139">
    <property type="entry name" value="Imidazole-glycPsynth_HisH"/>
</dbReference>
<dbReference type="NCBIfam" id="TIGR01855">
    <property type="entry name" value="IMP_synth_hisH"/>
    <property type="match status" value="1"/>
</dbReference>
<dbReference type="PANTHER" id="PTHR42701">
    <property type="entry name" value="IMIDAZOLE GLYCEROL PHOSPHATE SYNTHASE SUBUNIT HISH"/>
    <property type="match status" value="1"/>
</dbReference>
<dbReference type="PANTHER" id="PTHR42701:SF1">
    <property type="entry name" value="IMIDAZOLE GLYCEROL PHOSPHATE SYNTHASE SUBUNIT HISH"/>
    <property type="match status" value="1"/>
</dbReference>
<dbReference type="Pfam" id="PF00117">
    <property type="entry name" value="GATase"/>
    <property type="match status" value="1"/>
</dbReference>
<dbReference type="PIRSF" id="PIRSF000495">
    <property type="entry name" value="Amidotransf_hisH"/>
    <property type="match status" value="1"/>
</dbReference>
<dbReference type="SUPFAM" id="SSF52317">
    <property type="entry name" value="Class I glutamine amidotransferase-like"/>
    <property type="match status" value="1"/>
</dbReference>
<dbReference type="PROSITE" id="PS51273">
    <property type="entry name" value="GATASE_TYPE_1"/>
    <property type="match status" value="1"/>
</dbReference>
<feature type="chain" id="PRO_0000152378" description="Imidazole glycerol phosphate synthase subunit HisH">
    <location>
        <begin position="1"/>
        <end position="226"/>
    </location>
</feature>
<feature type="domain" description="Glutamine amidotransferase type-1" evidence="1">
    <location>
        <begin position="6"/>
        <end position="214"/>
    </location>
</feature>
<feature type="active site" description="Nucleophile" evidence="1">
    <location>
        <position position="84"/>
    </location>
</feature>
<feature type="active site" evidence="1">
    <location>
        <position position="189"/>
    </location>
</feature>
<feature type="active site" evidence="1">
    <location>
        <position position="191"/>
    </location>
</feature>
<gene>
    <name evidence="1" type="primary">hisH</name>
    <name type="ordered locus">glr0407</name>
</gene>
<organism>
    <name type="scientific">Gloeobacter violaceus (strain ATCC 29082 / PCC 7421)</name>
    <dbReference type="NCBI Taxonomy" id="251221"/>
    <lineage>
        <taxon>Bacteria</taxon>
        <taxon>Bacillati</taxon>
        <taxon>Cyanobacteriota</taxon>
        <taxon>Cyanophyceae</taxon>
        <taxon>Gloeobacterales</taxon>
        <taxon>Gloeobacteraceae</taxon>
        <taxon>Gloeobacter</taxon>
    </lineage>
</organism>
<comment type="function">
    <text evidence="1">IGPS catalyzes the conversion of PRFAR and glutamine to IGP, AICAR and glutamate. The HisH subunit catalyzes the hydrolysis of glutamine to glutamate and ammonia as part of the synthesis of IGP and AICAR. The resulting ammonia molecule is channeled to the active site of HisF.</text>
</comment>
<comment type="catalytic activity">
    <reaction evidence="1">
        <text>5-[(5-phospho-1-deoxy-D-ribulos-1-ylimino)methylamino]-1-(5-phospho-beta-D-ribosyl)imidazole-4-carboxamide + L-glutamine = D-erythro-1-(imidazol-4-yl)glycerol 3-phosphate + 5-amino-1-(5-phospho-beta-D-ribosyl)imidazole-4-carboxamide + L-glutamate + H(+)</text>
        <dbReference type="Rhea" id="RHEA:24793"/>
        <dbReference type="ChEBI" id="CHEBI:15378"/>
        <dbReference type="ChEBI" id="CHEBI:29985"/>
        <dbReference type="ChEBI" id="CHEBI:58278"/>
        <dbReference type="ChEBI" id="CHEBI:58359"/>
        <dbReference type="ChEBI" id="CHEBI:58475"/>
        <dbReference type="ChEBI" id="CHEBI:58525"/>
        <dbReference type="EC" id="4.3.2.10"/>
    </reaction>
</comment>
<comment type="catalytic activity">
    <reaction evidence="1">
        <text>L-glutamine + H2O = L-glutamate + NH4(+)</text>
        <dbReference type="Rhea" id="RHEA:15889"/>
        <dbReference type="ChEBI" id="CHEBI:15377"/>
        <dbReference type="ChEBI" id="CHEBI:28938"/>
        <dbReference type="ChEBI" id="CHEBI:29985"/>
        <dbReference type="ChEBI" id="CHEBI:58359"/>
        <dbReference type="EC" id="3.5.1.2"/>
    </reaction>
</comment>
<comment type="pathway">
    <text evidence="1">Amino-acid biosynthesis; L-histidine biosynthesis; L-histidine from 5-phospho-alpha-D-ribose 1-diphosphate: step 5/9.</text>
</comment>
<comment type="subunit">
    <text evidence="1">Heterodimer of HisH and HisF.</text>
</comment>
<comment type="subcellular location">
    <subcellularLocation>
        <location evidence="1">Cytoplasm</location>
    </subcellularLocation>
</comment>
<protein>
    <recommendedName>
        <fullName evidence="1">Imidazole glycerol phosphate synthase subunit HisH</fullName>
        <ecNumber evidence="1">4.3.2.10</ecNumber>
    </recommendedName>
    <alternativeName>
        <fullName evidence="1">IGP synthase glutaminase subunit</fullName>
        <ecNumber evidence="1">3.5.1.2</ecNumber>
    </alternativeName>
    <alternativeName>
        <fullName evidence="1">IGP synthase subunit HisH</fullName>
    </alternativeName>
    <alternativeName>
        <fullName evidence="1">ImGP synthase subunit HisH</fullName>
        <shortName evidence="1">IGPS subunit HisH</shortName>
    </alternativeName>
</protein>
<accession>Q7NNK4</accession>
<proteinExistence type="inferred from homology"/>
<reference key="1">
    <citation type="journal article" date="2003" name="DNA Res.">
        <title>Complete genome structure of Gloeobacter violaceus PCC 7421, a cyanobacterium that lacks thylakoids.</title>
        <authorList>
            <person name="Nakamura Y."/>
            <person name="Kaneko T."/>
            <person name="Sato S."/>
            <person name="Mimuro M."/>
            <person name="Miyashita H."/>
            <person name="Tsuchiya T."/>
            <person name="Sasamoto S."/>
            <person name="Watanabe A."/>
            <person name="Kawashima K."/>
            <person name="Kishida Y."/>
            <person name="Kiyokawa C."/>
            <person name="Kohara M."/>
            <person name="Matsumoto M."/>
            <person name="Matsuno A."/>
            <person name="Nakazaki N."/>
            <person name="Shimpo S."/>
            <person name="Takeuchi C."/>
            <person name="Yamada M."/>
            <person name="Tabata S."/>
        </authorList>
    </citation>
    <scope>NUCLEOTIDE SEQUENCE [LARGE SCALE GENOMIC DNA]</scope>
    <source>
        <strain>ATCC 29082 / PCC 7421</strain>
    </source>
</reference>
<sequence length="226" mass="24220">MARTPNIALVDYGVGNLHSARKGLEAMGARVTLSGQPLTLSAADGVVLPGVGSFDTAITRLNDRGLGDAIIQLVRAGQPMLGICLGLQVLFDSSEEGRLPGLGLLPGRVRRFRSEPGLTIPHVGWNQLHFDNVDCPLWRDLAAGGWVYFVHSYYVDPARAEDRAASAVHGSQHFTAAVCRDNLMAVQFHPEKSADTGLRILKNFVERAASRSAAEVAARCATRPPA</sequence>
<keyword id="KW-0028">Amino-acid biosynthesis</keyword>
<keyword id="KW-0963">Cytoplasm</keyword>
<keyword id="KW-0315">Glutamine amidotransferase</keyword>
<keyword id="KW-0368">Histidine biosynthesis</keyword>
<keyword id="KW-0378">Hydrolase</keyword>
<keyword id="KW-0456">Lyase</keyword>
<keyword id="KW-1185">Reference proteome</keyword>
<name>HIS5_GLOVI</name>